<protein>
    <recommendedName>
        <fullName evidence="1">Histidine--tRNA ligase</fullName>
        <ecNumber evidence="1">6.1.1.21</ecNumber>
    </recommendedName>
    <alternativeName>
        <fullName evidence="1">Histidyl-tRNA synthetase</fullName>
        <shortName evidence="1">HisRS</shortName>
    </alternativeName>
</protein>
<reference key="1">
    <citation type="submission" date="2007-04" db="EMBL/GenBank/DDBJ databases">
        <title>Genome sequence of the thermophilic hydrogen-producing bacterium Caldicellulosiruptor saccharolyticus DSM 8903.</title>
        <authorList>
            <person name="Copeland A."/>
            <person name="Lucas S."/>
            <person name="Lapidus A."/>
            <person name="Barry K."/>
            <person name="Detter J.C."/>
            <person name="Glavina del Rio T."/>
            <person name="Hammon N."/>
            <person name="Israni S."/>
            <person name="Dalin E."/>
            <person name="Tice H."/>
            <person name="Pitluck S."/>
            <person name="Kiss H."/>
            <person name="Brettin T."/>
            <person name="Bruce D."/>
            <person name="Han C."/>
            <person name="Schmutz J."/>
            <person name="Larimer F."/>
            <person name="Land M."/>
            <person name="Hauser L."/>
            <person name="Kyrpides N."/>
            <person name="Lykidis A."/>
            <person name="van de Werken H.J.G."/>
            <person name="Verhaart M.R.A."/>
            <person name="VanFossen A.L."/>
            <person name="Lewis D.L."/>
            <person name="Nichols J.D."/>
            <person name="Goorissen H.P."/>
            <person name="van Niel E.W.J."/>
            <person name="Stams F.J.M."/>
            <person name="Willquist K.U."/>
            <person name="Ward D.E."/>
            <person name="van der Oost J."/>
            <person name="Kelly R.M."/>
            <person name="Kengen S.M.W."/>
            <person name="Richardson P."/>
        </authorList>
    </citation>
    <scope>NUCLEOTIDE SEQUENCE [LARGE SCALE GENOMIC DNA]</scope>
    <source>
        <strain>ATCC 43494 / DSM 8903 / Tp8T 6331</strain>
    </source>
</reference>
<name>SYH_CALS8</name>
<gene>
    <name evidence="1" type="primary">hisS</name>
    <name type="ordered locus">Csac_0676</name>
</gene>
<proteinExistence type="inferred from homology"/>
<evidence type="ECO:0000255" key="1">
    <source>
        <dbReference type="HAMAP-Rule" id="MF_00127"/>
    </source>
</evidence>
<accession>A4XHB0</accession>
<comment type="catalytic activity">
    <reaction evidence="1">
        <text>tRNA(His) + L-histidine + ATP = L-histidyl-tRNA(His) + AMP + diphosphate + H(+)</text>
        <dbReference type="Rhea" id="RHEA:17313"/>
        <dbReference type="Rhea" id="RHEA-COMP:9665"/>
        <dbReference type="Rhea" id="RHEA-COMP:9689"/>
        <dbReference type="ChEBI" id="CHEBI:15378"/>
        <dbReference type="ChEBI" id="CHEBI:30616"/>
        <dbReference type="ChEBI" id="CHEBI:33019"/>
        <dbReference type="ChEBI" id="CHEBI:57595"/>
        <dbReference type="ChEBI" id="CHEBI:78442"/>
        <dbReference type="ChEBI" id="CHEBI:78527"/>
        <dbReference type="ChEBI" id="CHEBI:456215"/>
        <dbReference type="EC" id="6.1.1.21"/>
    </reaction>
</comment>
<comment type="subunit">
    <text evidence="1">Homodimer.</text>
</comment>
<comment type="subcellular location">
    <subcellularLocation>
        <location evidence="1">Cytoplasm</location>
    </subcellularLocation>
</comment>
<comment type="similarity">
    <text evidence="1">Belongs to the class-II aminoacyl-tRNA synthetase family.</text>
</comment>
<feature type="chain" id="PRO_1000016332" description="Histidine--tRNA ligase">
    <location>
        <begin position="1"/>
        <end position="419"/>
    </location>
</feature>
<organism>
    <name type="scientific">Caldicellulosiruptor saccharolyticus (strain ATCC 43494 / DSM 8903 / Tp8T 6331)</name>
    <dbReference type="NCBI Taxonomy" id="351627"/>
    <lineage>
        <taxon>Bacteria</taxon>
        <taxon>Bacillati</taxon>
        <taxon>Bacillota</taxon>
        <taxon>Bacillota incertae sedis</taxon>
        <taxon>Caldicellulosiruptorales</taxon>
        <taxon>Caldicellulosiruptoraceae</taxon>
        <taxon>Caldicellulosiruptor</taxon>
    </lineage>
</organism>
<sequence length="419" mass="47554">MKIQAPKGTKDVLPEESYIWQYVESKFRQICKLYGYQEVRFPTFEYTELFQRGVGETTDIVQKEMYTFLDKGGRSITLRPEGTASVARLFIEHGFASRPMPQRLYYIISAFRYENTQGGRYREFHQFGIENFGSKSPVTDAEIISLSYNFFVSLGLDNIVVNINSIGCPVCRKDYVKNLKEYFLGYYDKLCPTCKQRLDKNPMRILDCKEDNCKLIAQDAPKPIEYLCDECKTHFEALKGYLDAAGVCYKVDPYIVRGLDYYTRTVFEIVDVVLDKELAICGGGRYDNLIEQIGGSSTPGIGFAIGVERLIMLLSQKGLIPQKPQVPQVFIATLGDLATKKAFEIASTLRFEGISTVIEELSRSLKSQMKYADKLGCDFAVIIGDDELEKGVCKVREMKTSSEEVVRIEGLAQHIKSKI</sequence>
<dbReference type="EC" id="6.1.1.21" evidence="1"/>
<dbReference type="EMBL" id="CP000679">
    <property type="protein sequence ID" value="ABP66295.1"/>
    <property type="molecule type" value="Genomic_DNA"/>
</dbReference>
<dbReference type="RefSeq" id="WP_011916244.1">
    <property type="nucleotide sequence ID" value="NC_009437.1"/>
</dbReference>
<dbReference type="SMR" id="A4XHB0"/>
<dbReference type="STRING" id="351627.Csac_0676"/>
<dbReference type="KEGG" id="csc:Csac_0676"/>
<dbReference type="eggNOG" id="COG0124">
    <property type="taxonomic scope" value="Bacteria"/>
</dbReference>
<dbReference type="HOGENOM" id="CLU_025113_1_1_9"/>
<dbReference type="OrthoDB" id="9800814at2"/>
<dbReference type="Proteomes" id="UP000000256">
    <property type="component" value="Chromosome"/>
</dbReference>
<dbReference type="GO" id="GO:0005737">
    <property type="term" value="C:cytoplasm"/>
    <property type="evidence" value="ECO:0007669"/>
    <property type="project" value="UniProtKB-SubCell"/>
</dbReference>
<dbReference type="GO" id="GO:0005524">
    <property type="term" value="F:ATP binding"/>
    <property type="evidence" value="ECO:0007669"/>
    <property type="project" value="UniProtKB-UniRule"/>
</dbReference>
<dbReference type="GO" id="GO:0140096">
    <property type="term" value="F:catalytic activity, acting on a protein"/>
    <property type="evidence" value="ECO:0007669"/>
    <property type="project" value="UniProtKB-ARBA"/>
</dbReference>
<dbReference type="GO" id="GO:0004821">
    <property type="term" value="F:histidine-tRNA ligase activity"/>
    <property type="evidence" value="ECO:0007669"/>
    <property type="project" value="UniProtKB-UniRule"/>
</dbReference>
<dbReference type="GO" id="GO:0016740">
    <property type="term" value="F:transferase activity"/>
    <property type="evidence" value="ECO:0007669"/>
    <property type="project" value="UniProtKB-ARBA"/>
</dbReference>
<dbReference type="GO" id="GO:0006427">
    <property type="term" value="P:histidyl-tRNA aminoacylation"/>
    <property type="evidence" value="ECO:0007669"/>
    <property type="project" value="UniProtKB-UniRule"/>
</dbReference>
<dbReference type="CDD" id="cd00773">
    <property type="entry name" value="HisRS-like_core"/>
    <property type="match status" value="1"/>
</dbReference>
<dbReference type="CDD" id="cd00859">
    <property type="entry name" value="HisRS_anticodon"/>
    <property type="match status" value="1"/>
</dbReference>
<dbReference type="Gene3D" id="3.40.50.800">
    <property type="entry name" value="Anticodon-binding domain"/>
    <property type="match status" value="1"/>
</dbReference>
<dbReference type="Gene3D" id="3.30.930.10">
    <property type="entry name" value="Bira Bifunctional Protein, Domain 2"/>
    <property type="match status" value="1"/>
</dbReference>
<dbReference type="HAMAP" id="MF_00127">
    <property type="entry name" value="His_tRNA_synth"/>
    <property type="match status" value="1"/>
</dbReference>
<dbReference type="InterPro" id="IPR006195">
    <property type="entry name" value="aa-tRNA-synth_II"/>
</dbReference>
<dbReference type="InterPro" id="IPR045864">
    <property type="entry name" value="aa-tRNA-synth_II/BPL/LPL"/>
</dbReference>
<dbReference type="InterPro" id="IPR004154">
    <property type="entry name" value="Anticodon-bd"/>
</dbReference>
<dbReference type="InterPro" id="IPR036621">
    <property type="entry name" value="Anticodon-bd_dom_sf"/>
</dbReference>
<dbReference type="InterPro" id="IPR015807">
    <property type="entry name" value="His-tRNA-ligase"/>
</dbReference>
<dbReference type="InterPro" id="IPR041715">
    <property type="entry name" value="HisRS-like_core"/>
</dbReference>
<dbReference type="InterPro" id="IPR004516">
    <property type="entry name" value="HisRS/HisZ"/>
</dbReference>
<dbReference type="InterPro" id="IPR033656">
    <property type="entry name" value="HisRS_anticodon"/>
</dbReference>
<dbReference type="NCBIfam" id="TIGR00442">
    <property type="entry name" value="hisS"/>
    <property type="match status" value="1"/>
</dbReference>
<dbReference type="PANTHER" id="PTHR43707:SF1">
    <property type="entry name" value="HISTIDINE--TRNA LIGASE, MITOCHONDRIAL-RELATED"/>
    <property type="match status" value="1"/>
</dbReference>
<dbReference type="PANTHER" id="PTHR43707">
    <property type="entry name" value="HISTIDYL-TRNA SYNTHETASE"/>
    <property type="match status" value="1"/>
</dbReference>
<dbReference type="Pfam" id="PF03129">
    <property type="entry name" value="HGTP_anticodon"/>
    <property type="match status" value="1"/>
</dbReference>
<dbReference type="Pfam" id="PF13393">
    <property type="entry name" value="tRNA-synt_His"/>
    <property type="match status" value="1"/>
</dbReference>
<dbReference type="PIRSF" id="PIRSF001549">
    <property type="entry name" value="His-tRNA_synth"/>
    <property type="match status" value="1"/>
</dbReference>
<dbReference type="SUPFAM" id="SSF52954">
    <property type="entry name" value="Class II aaRS ABD-related"/>
    <property type="match status" value="1"/>
</dbReference>
<dbReference type="SUPFAM" id="SSF55681">
    <property type="entry name" value="Class II aaRS and biotin synthetases"/>
    <property type="match status" value="1"/>
</dbReference>
<dbReference type="PROSITE" id="PS50862">
    <property type="entry name" value="AA_TRNA_LIGASE_II"/>
    <property type="match status" value="1"/>
</dbReference>
<keyword id="KW-0030">Aminoacyl-tRNA synthetase</keyword>
<keyword id="KW-0067">ATP-binding</keyword>
<keyword id="KW-0963">Cytoplasm</keyword>
<keyword id="KW-0436">Ligase</keyword>
<keyword id="KW-0547">Nucleotide-binding</keyword>
<keyword id="KW-0648">Protein biosynthesis</keyword>